<proteinExistence type="inferred from homology"/>
<gene>
    <name type="primary">NB</name>
</gene>
<organismHost>
    <name type="scientific">Homo sapiens</name>
    <name type="common">Human</name>
    <dbReference type="NCBI Taxonomy" id="9606"/>
</organismHost>
<sequence>MNNATFNYTNVNPISHIRGSVIITICVSFTVILTVFGYIAKIFNNKNNCTNNVIGLRKHIKCSGCEPFCNKRDDISSPRTGVDIPSFILPGLNLSKSTPN</sequence>
<name>VNB_INBOR</name>
<dbReference type="EMBL" id="M30636">
    <property type="protein sequence ID" value="AAA43740.1"/>
    <property type="molecule type" value="Genomic_RNA"/>
</dbReference>
<dbReference type="PIR" id="F36825">
    <property type="entry name" value="F36825"/>
</dbReference>
<dbReference type="GlyCosmos" id="P16202">
    <property type="glycosylation" value="2 sites, No reported glycans"/>
</dbReference>
<dbReference type="GO" id="GO:0033644">
    <property type="term" value="C:host cell membrane"/>
    <property type="evidence" value="ECO:0007669"/>
    <property type="project" value="UniProtKB-KW"/>
</dbReference>
<dbReference type="GO" id="GO:0016020">
    <property type="term" value="C:membrane"/>
    <property type="evidence" value="ECO:0007669"/>
    <property type="project" value="UniProtKB-KW"/>
</dbReference>
<dbReference type="GO" id="GO:0055036">
    <property type="term" value="C:virion membrane"/>
    <property type="evidence" value="ECO:0007669"/>
    <property type="project" value="UniProtKB-SubCell"/>
</dbReference>
<dbReference type="GO" id="GO:0015267">
    <property type="term" value="F:channel activity"/>
    <property type="evidence" value="ECO:0007669"/>
    <property type="project" value="UniProtKB-KW"/>
</dbReference>
<dbReference type="GO" id="GO:1902600">
    <property type="term" value="P:proton transmembrane transport"/>
    <property type="evidence" value="ECO:0007669"/>
    <property type="project" value="UniProtKB-KW"/>
</dbReference>
<dbReference type="InterPro" id="IPR007288">
    <property type="entry name" value="InfluenzaB_glycoprotein_NB"/>
</dbReference>
<dbReference type="Pfam" id="PF04159">
    <property type="entry name" value="NB"/>
    <property type="match status" value="1"/>
</dbReference>
<organism>
    <name type="scientific">Influenza B virus (strain B/Oregon/5/1980)</name>
    <dbReference type="NCBI Taxonomy" id="11541"/>
    <lineage>
        <taxon>Viruses</taxon>
        <taxon>Riboviria</taxon>
        <taxon>Orthornavirae</taxon>
        <taxon>Negarnaviricota</taxon>
        <taxon>Polyploviricotina</taxon>
        <taxon>Insthoviricetes</taxon>
        <taxon>Articulavirales</taxon>
        <taxon>Orthomyxoviridae</taxon>
        <taxon>Betainfluenzavirus</taxon>
        <taxon>Betainfluenzavirus influenzae</taxon>
        <taxon>Influenza B virus</taxon>
    </lineage>
</organism>
<accession>P16202</accession>
<keyword id="KW-0325">Glycoprotein</keyword>
<keyword id="KW-0375">Hydrogen ion transport</keyword>
<keyword id="KW-0407">Ion channel</keyword>
<keyword id="KW-0406">Ion transport</keyword>
<keyword id="KW-0472">Membrane</keyword>
<keyword id="KW-0735">Signal-anchor</keyword>
<keyword id="KW-0812">Transmembrane</keyword>
<keyword id="KW-1133">Transmembrane helix</keyword>
<keyword id="KW-0813">Transport</keyword>
<keyword id="KW-1182">Viral ion channel</keyword>
<keyword id="KW-0946">Virion</keyword>
<feature type="chain" id="PRO_0000078911" description="Glycoprotein NB">
    <location>
        <begin position="1"/>
        <end position="100"/>
    </location>
</feature>
<feature type="topological domain" description="Virion surface" evidence="2">
    <location>
        <begin position="1"/>
        <end position="18"/>
    </location>
</feature>
<feature type="transmembrane region" description="Helical; Signal-anchor for type III membrane protein" evidence="2">
    <location>
        <begin position="19"/>
        <end position="40"/>
    </location>
</feature>
<feature type="topological domain" description="Intravirion" evidence="2">
    <location>
        <begin position="41"/>
        <end position="100"/>
    </location>
</feature>
<feature type="glycosylation site" description="N-linked (GlcNAc...) asparagine; by host" evidence="2">
    <location>
        <position position="3"/>
    </location>
</feature>
<feature type="glycosylation site" description="N-linked (GlcNAc...) asparagine; by host" evidence="2">
    <location>
        <position position="7"/>
    </location>
</feature>
<protein>
    <recommendedName>
        <fullName>Glycoprotein NB</fullName>
    </recommendedName>
</protein>
<reference key="1">
    <citation type="journal article" date="1990" name="Virology">
        <title>Antigenic, sequence, and crystal variation in influenza B neuraminidase.</title>
        <authorList>
            <person name="Air G.M."/>
            <person name="Laver W.G."/>
            <person name="Luo M."/>
            <person name="Stray S.J."/>
            <person name="Legrone G."/>
            <person name="Webster R.G."/>
        </authorList>
    </citation>
    <scope>NUCLEOTIDE SEQUENCE [GENOMIC RNA]</scope>
</reference>
<evidence type="ECO:0000250" key="1"/>
<evidence type="ECO:0000255" key="2"/>
<evidence type="ECO:0000305" key="3"/>
<comment type="function">
    <text evidence="1">Putative viral proton channel. May play a role in virus entry (By similarity).</text>
</comment>
<comment type="subunit">
    <text evidence="1">Dimer.</text>
</comment>
<comment type="subcellular location">
    <subcellularLocation>
        <location evidence="3">Virion membrane</location>
        <topology evidence="3">Single-pass type III membrane protein</topology>
    </subcellularLocation>
</comment>
<comment type="similarity">
    <text evidence="3">Belongs to the influenza viruses type B glycoprotein NB family.</text>
</comment>